<comment type="function">
    <text evidence="1">Part of a stress-induced multi-chaperone system, it is involved in the recovery of the cell from heat-induced damage, in cooperation with DnaK, DnaJ and GrpE. Acts before DnaK, in the processing of protein aggregates. Protein binding stimulates the ATPase activity; ATP hydrolysis unfolds the denatured protein aggregates, which probably helps expose new hydrophobic binding sites on the surface of ClpB-bound aggregates, contributing to the solubilization and refolding of denatured protein aggregates by DnaK (By similarity).</text>
</comment>
<comment type="subunit">
    <text evidence="1">Homohexamer. The oligomerization is ATP-dependent (By similarity).</text>
</comment>
<comment type="subcellular location">
    <subcellularLocation>
        <location evidence="3">Cytoplasm</location>
    </subcellularLocation>
</comment>
<comment type="domain">
    <text evidence="1">The Clp repeat (R) domain probably functions as a substrate-discriminating domain, recruiting aggregated proteins to the ClpB hexamer and/or stabilizing bound proteins. The NBD2 domain is responsible for oligomerization, whereas the NBD1 domain stabilizes the hexamer probably in an ATP-dependent manner. The movement of the coiled-coil domain is essential for ClpB ability to rescue proteins from an aggregated state, probably by pulling apart large aggregated proteins, which are bound between the coiled-coils motifs of adjacent ClpB subunits in the functional hexamer (By similarity).</text>
</comment>
<comment type="similarity">
    <text evidence="3">Belongs to the ClpA/ClpB family.</text>
</comment>
<organism>
    <name type="scientific">Prochlorococcus marinus (strain MIT 9313)</name>
    <dbReference type="NCBI Taxonomy" id="74547"/>
    <lineage>
        <taxon>Bacteria</taxon>
        <taxon>Bacillati</taxon>
        <taxon>Cyanobacteriota</taxon>
        <taxon>Cyanophyceae</taxon>
        <taxon>Synechococcales</taxon>
        <taxon>Prochlorococcaceae</taxon>
        <taxon>Prochlorococcus</taxon>
    </lineage>
</organism>
<sequence>MQPTADQFTEKGWAAIVLAQQLAQQRKHQQLETEHLLLSLLQQNALAGRILEKAGVSIGNLQTAVEAHLQEQPTMQAAPDSVYLGKGVNDLLDQAEKHKQAFGDSFISIEHLLLALAGDNRCGRKLLNQAGVDAGKLKVAIDAVRGNQKVTDQNPEGTYESLEKYGRDLSAAAREGKLDPVIGRDDEIRRTIQILSRRTKNNPVLIGEPGVGKTAIVEGLAQRIVNGDVPAALQNRQLITLDMGALIAGAKYRGEFEERLKAVLKEVTASEGQIVLFIDEIHTVVGAGATGGAMDASNLLKPMLARGELRCIGATTLDEHRQHIEKDPALERRFQQVLVDQPTVQDTISILRGLKERYEVHHGVRIADNALVAAAVLSSRYIADRFLPDKAIDLMDESAARLKMEITSKPEEIDEIDRKIVQLEMEKLSLGRESDSVSKERLEKLERELAELAEQQSALNAQWQQEKGAIDDLSSLKEEIERVQLQVEQAKRSYDLNKAAELEYGTLAGLQKQLSEKETALAQDGEAGDKSLLREEVTEDDIADVIAKWTGIPVAKLVQSEMEKLLGLEAELHQRVIGQEQAVQAVADAIQRSRAGLSDPNRPIASFLFLGPTGVGKTELSKALASQLFDSEAALVRIDMSEYMEKHSVSRLIGAPPGYVGYEAGGQLTEAVRRRPYAVILFDEVEKAHQDVFNVMLQILDDGRVTDGQGRTVDFTNTVLILTSNIGSQSILDLGGDDSQYREMERRVHDALHAHFRPEFLNRLDETIIFHSLRREELRQIVALQVNRLRERLCDRKLGLEISDTAADWLANAGYDPVYGARPLKRAIQRELETPIAKSILAGLYGDSQIVHVDVDVDQERLSFR</sequence>
<protein>
    <recommendedName>
        <fullName>Chaperone protein ClpB</fullName>
    </recommendedName>
</protein>
<dbReference type="EMBL" id="BX548175">
    <property type="protein sequence ID" value="CAE20624.1"/>
    <property type="molecule type" value="Genomic_DNA"/>
</dbReference>
<dbReference type="RefSeq" id="WP_011129828.1">
    <property type="nucleotide sequence ID" value="NC_005071.1"/>
</dbReference>
<dbReference type="SMR" id="Q7V8B1"/>
<dbReference type="KEGG" id="pmt:PMT_0449"/>
<dbReference type="eggNOG" id="COG0542">
    <property type="taxonomic scope" value="Bacteria"/>
</dbReference>
<dbReference type="HOGENOM" id="CLU_005070_4_2_3"/>
<dbReference type="OrthoDB" id="9803641at2"/>
<dbReference type="Proteomes" id="UP000001423">
    <property type="component" value="Chromosome"/>
</dbReference>
<dbReference type="GO" id="GO:0005737">
    <property type="term" value="C:cytoplasm"/>
    <property type="evidence" value="ECO:0007669"/>
    <property type="project" value="UniProtKB-SubCell"/>
</dbReference>
<dbReference type="GO" id="GO:0005524">
    <property type="term" value="F:ATP binding"/>
    <property type="evidence" value="ECO:0007669"/>
    <property type="project" value="UniProtKB-KW"/>
</dbReference>
<dbReference type="GO" id="GO:0016887">
    <property type="term" value="F:ATP hydrolysis activity"/>
    <property type="evidence" value="ECO:0007669"/>
    <property type="project" value="InterPro"/>
</dbReference>
<dbReference type="GO" id="GO:0034605">
    <property type="term" value="P:cellular response to heat"/>
    <property type="evidence" value="ECO:0007669"/>
    <property type="project" value="TreeGrafter"/>
</dbReference>
<dbReference type="GO" id="GO:0042026">
    <property type="term" value="P:protein refolding"/>
    <property type="evidence" value="ECO:0007669"/>
    <property type="project" value="InterPro"/>
</dbReference>
<dbReference type="CDD" id="cd00009">
    <property type="entry name" value="AAA"/>
    <property type="match status" value="1"/>
</dbReference>
<dbReference type="CDD" id="cd19499">
    <property type="entry name" value="RecA-like_ClpB_Hsp104-like"/>
    <property type="match status" value="1"/>
</dbReference>
<dbReference type="FunFam" id="1.10.8.60:FF:000017">
    <property type="entry name" value="ATP-dependent chaperone ClpB"/>
    <property type="match status" value="1"/>
</dbReference>
<dbReference type="FunFam" id="3.40.50.300:FF:000120">
    <property type="entry name" value="ATP-dependent chaperone ClpB"/>
    <property type="match status" value="1"/>
</dbReference>
<dbReference type="FunFam" id="3.40.50.300:FF:000025">
    <property type="entry name" value="ATP-dependent Clp protease subunit"/>
    <property type="match status" value="1"/>
</dbReference>
<dbReference type="FunFam" id="3.40.50.300:FF:000010">
    <property type="entry name" value="Chaperone clpB 1, putative"/>
    <property type="match status" value="1"/>
</dbReference>
<dbReference type="Gene3D" id="1.10.8.60">
    <property type="match status" value="1"/>
</dbReference>
<dbReference type="Gene3D" id="1.10.1780.10">
    <property type="entry name" value="Clp, N-terminal domain"/>
    <property type="match status" value="1"/>
</dbReference>
<dbReference type="Gene3D" id="3.40.50.300">
    <property type="entry name" value="P-loop containing nucleotide triphosphate hydrolases"/>
    <property type="match status" value="3"/>
</dbReference>
<dbReference type="InterPro" id="IPR003593">
    <property type="entry name" value="AAA+_ATPase"/>
</dbReference>
<dbReference type="InterPro" id="IPR003959">
    <property type="entry name" value="ATPase_AAA_core"/>
</dbReference>
<dbReference type="InterPro" id="IPR017730">
    <property type="entry name" value="Chaperonin_ClpB"/>
</dbReference>
<dbReference type="InterPro" id="IPR019489">
    <property type="entry name" value="Clp_ATPase_C"/>
</dbReference>
<dbReference type="InterPro" id="IPR036628">
    <property type="entry name" value="Clp_N_dom_sf"/>
</dbReference>
<dbReference type="InterPro" id="IPR004176">
    <property type="entry name" value="Clp_R_dom"/>
</dbReference>
<dbReference type="InterPro" id="IPR001270">
    <property type="entry name" value="ClpA/B"/>
</dbReference>
<dbReference type="InterPro" id="IPR018368">
    <property type="entry name" value="ClpA/B_CS1"/>
</dbReference>
<dbReference type="InterPro" id="IPR028299">
    <property type="entry name" value="ClpA/B_CS2"/>
</dbReference>
<dbReference type="InterPro" id="IPR041546">
    <property type="entry name" value="ClpA/ClpB_AAA_lid"/>
</dbReference>
<dbReference type="InterPro" id="IPR050130">
    <property type="entry name" value="ClpA_ClpB"/>
</dbReference>
<dbReference type="InterPro" id="IPR027417">
    <property type="entry name" value="P-loop_NTPase"/>
</dbReference>
<dbReference type="NCBIfam" id="TIGR03346">
    <property type="entry name" value="chaperone_ClpB"/>
    <property type="match status" value="1"/>
</dbReference>
<dbReference type="PANTHER" id="PTHR11638">
    <property type="entry name" value="ATP-DEPENDENT CLP PROTEASE"/>
    <property type="match status" value="1"/>
</dbReference>
<dbReference type="PANTHER" id="PTHR11638:SF18">
    <property type="entry name" value="HEAT SHOCK PROTEIN 104"/>
    <property type="match status" value="1"/>
</dbReference>
<dbReference type="Pfam" id="PF00004">
    <property type="entry name" value="AAA"/>
    <property type="match status" value="1"/>
</dbReference>
<dbReference type="Pfam" id="PF07724">
    <property type="entry name" value="AAA_2"/>
    <property type="match status" value="1"/>
</dbReference>
<dbReference type="Pfam" id="PF17871">
    <property type="entry name" value="AAA_lid_9"/>
    <property type="match status" value="1"/>
</dbReference>
<dbReference type="Pfam" id="PF02861">
    <property type="entry name" value="Clp_N"/>
    <property type="match status" value="2"/>
</dbReference>
<dbReference type="Pfam" id="PF10431">
    <property type="entry name" value="ClpB_D2-small"/>
    <property type="match status" value="1"/>
</dbReference>
<dbReference type="PRINTS" id="PR00300">
    <property type="entry name" value="CLPPROTEASEA"/>
</dbReference>
<dbReference type="SMART" id="SM00382">
    <property type="entry name" value="AAA"/>
    <property type="match status" value="2"/>
</dbReference>
<dbReference type="SMART" id="SM01086">
    <property type="entry name" value="ClpB_D2-small"/>
    <property type="match status" value="1"/>
</dbReference>
<dbReference type="SUPFAM" id="SSF81923">
    <property type="entry name" value="Double Clp-N motif"/>
    <property type="match status" value="1"/>
</dbReference>
<dbReference type="SUPFAM" id="SSF52540">
    <property type="entry name" value="P-loop containing nucleoside triphosphate hydrolases"/>
    <property type="match status" value="2"/>
</dbReference>
<dbReference type="PROSITE" id="PS51903">
    <property type="entry name" value="CLP_R"/>
    <property type="match status" value="1"/>
</dbReference>
<dbReference type="PROSITE" id="PS00870">
    <property type="entry name" value="CLPAB_1"/>
    <property type="match status" value="1"/>
</dbReference>
<dbReference type="PROSITE" id="PS00871">
    <property type="entry name" value="CLPAB_2"/>
    <property type="match status" value="1"/>
</dbReference>
<evidence type="ECO:0000250" key="1"/>
<evidence type="ECO:0000255" key="2">
    <source>
        <dbReference type="PROSITE-ProRule" id="PRU01251"/>
    </source>
</evidence>
<evidence type="ECO:0000305" key="3"/>
<keyword id="KW-0067">ATP-binding</keyword>
<keyword id="KW-0143">Chaperone</keyword>
<keyword id="KW-0175">Coiled coil</keyword>
<keyword id="KW-0963">Cytoplasm</keyword>
<keyword id="KW-0547">Nucleotide-binding</keyword>
<keyword id="KW-1185">Reference proteome</keyword>
<keyword id="KW-0677">Repeat</keyword>
<keyword id="KW-0346">Stress response</keyword>
<reference key="1">
    <citation type="journal article" date="2003" name="Nature">
        <title>Genome divergence in two Prochlorococcus ecotypes reflects oceanic niche differentiation.</title>
        <authorList>
            <person name="Rocap G."/>
            <person name="Larimer F.W."/>
            <person name="Lamerdin J.E."/>
            <person name="Malfatti S."/>
            <person name="Chain P."/>
            <person name="Ahlgren N.A."/>
            <person name="Arellano A."/>
            <person name="Coleman M."/>
            <person name="Hauser L."/>
            <person name="Hess W.R."/>
            <person name="Johnson Z.I."/>
            <person name="Land M.L."/>
            <person name="Lindell D."/>
            <person name="Post A.F."/>
            <person name="Regala W."/>
            <person name="Shah M."/>
            <person name="Shaw S.L."/>
            <person name="Steglich C."/>
            <person name="Sullivan M.B."/>
            <person name="Ting C.S."/>
            <person name="Tolonen A."/>
            <person name="Webb E.A."/>
            <person name="Zinser E.R."/>
            <person name="Chisholm S.W."/>
        </authorList>
    </citation>
    <scope>NUCLEOTIDE SEQUENCE [LARGE SCALE GENOMIC DNA]</scope>
    <source>
        <strain>MIT 9313</strain>
    </source>
</reference>
<name>CLPB_PROMM</name>
<gene>
    <name type="primary">clpB</name>
    <name type="ordered locus">PMT_0449</name>
</gene>
<accession>Q7V8B1</accession>
<feature type="chain" id="PRO_0000191159" description="Chaperone protein ClpB">
    <location>
        <begin position="1"/>
        <end position="865"/>
    </location>
</feature>
<feature type="domain" description="Clp R" evidence="2">
    <location>
        <begin position="5"/>
        <end position="147"/>
    </location>
</feature>
<feature type="region of interest" description="Repeat 1" evidence="2">
    <location>
        <begin position="8"/>
        <end position="72"/>
    </location>
</feature>
<feature type="region of interest" description="Repeat 2" evidence="2">
    <location>
        <begin position="84"/>
        <end position="147"/>
    </location>
</feature>
<feature type="region of interest" description="NBD1" evidence="1">
    <location>
        <begin position="160"/>
        <end position="341"/>
    </location>
</feature>
<feature type="region of interest" description="Linker" evidence="1">
    <location>
        <begin position="342"/>
        <end position="551"/>
    </location>
</feature>
<feature type="region of interest" description="NBD2" evidence="1">
    <location>
        <begin position="561"/>
        <end position="772"/>
    </location>
</feature>
<feature type="region of interest" description="C-terminal" evidence="1">
    <location>
        <begin position="773"/>
        <end position="865"/>
    </location>
</feature>
<feature type="coiled-coil region" evidence="1">
    <location>
        <begin position="392"/>
        <end position="526"/>
    </location>
</feature>
<feature type="binding site" evidence="1">
    <location>
        <begin position="207"/>
        <end position="214"/>
    </location>
    <ligand>
        <name>ATP</name>
        <dbReference type="ChEBI" id="CHEBI:30616"/>
        <label>1</label>
    </ligand>
</feature>
<feature type="binding site" evidence="1">
    <location>
        <begin position="611"/>
        <end position="618"/>
    </location>
    <ligand>
        <name>ATP</name>
        <dbReference type="ChEBI" id="CHEBI:30616"/>
        <label>2</label>
    </ligand>
</feature>
<proteinExistence type="inferred from homology"/>